<gene>
    <name evidence="1" type="primary">thiC</name>
    <name type="ordered locus">VC_0061</name>
</gene>
<name>THIC_VIBCH</name>
<dbReference type="EC" id="4.1.99.17" evidence="1"/>
<dbReference type="EMBL" id="AE003852">
    <property type="protein sequence ID" value="AAF93239.1"/>
    <property type="molecule type" value="Genomic_DNA"/>
</dbReference>
<dbReference type="PIR" id="H82368">
    <property type="entry name" value="H82368"/>
</dbReference>
<dbReference type="RefSeq" id="NP_229720.1">
    <property type="nucleotide sequence ID" value="NC_002505.1"/>
</dbReference>
<dbReference type="RefSeq" id="WP_000071109.1">
    <property type="nucleotide sequence ID" value="NZ_LT906614.1"/>
</dbReference>
<dbReference type="SMR" id="Q9KVS8"/>
<dbReference type="STRING" id="243277.VC_0061"/>
<dbReference type="DNASU" id="2614465"/>
<dbReference type="EnsemblBacteria" id="AAF93239">
    <property type="protein sequence ID" value="AAF93239"/>
    <property type="gene ID" value="VC_0061"/>
</dbReference>
<dbReference type="KEGG" id="vch:VC_0061"/>
<dbReference type="PATRIC" id="fig|243277.26.peg.59"/>
<dbReference type="eggNOG" id="COG0422">
    <property type="taxonomic scope" value="Bacteria"/>
</dbReference>
<dbReference type="HOGENOM" id="CLU_013181_2_1_6"/>
<dbReference type="UniPathway" id="UPA00060"/>
<dbReference type="Proteomes" id="UP000000584">
    <property type="component" value="Chromosome 1"/>
</dbReference>
<dbReference type="GO" id="GO:0005829">
    <property type="term" value="C:cytosol"/>
    <property type="evidence" value="ECO:0000318"/>
    <property type="project" value="GO_Central"/>
</dbReference>
<dbReference type="GO" id="GO:0051539">
    <property type="term" value="F:4 iron, 4 sulfur cluster binding"/>
    <property type="evidence" value="ECO:0007669"/>
    <property type="project" value="UniProtKB-KW"/>
</dbReference>
<dbReference type="GO" id="GO:0016830">
    <property type="term" value="F:carbon-carbon lyase activity"/>
    <property type="evidence" value="ECO:0007669"/>
    <property type="project" value="InterPro"/>
</dbReference>
<dbReference type="GO" id="GO:0008270">
    <property type="term" value="F:zinc ion binding"/>
    <property type="evidence" value="ECO:0007669"/>
    <property type="project" value="UniProtKB-UniRule"/>
</dbReference>
<dbReference type="GO" id="GO:0009228">
    <property type="term" value="P:thiamine biosynthetic process"/>
    <property type="evidence" value="ECO:0000318"/>
    <property type="project" value="GO_Central"/>
</dbReference>
<dbReference type="GO" id="GO:0009229">
    <property type="term" value="P:thiamine diphosphate biosynthetic process"/>
    <property type="evidence" value="ECO:0007669"/>
    <property type="project" value="UniProtKB-UniRule"/>
</dbReference>
<dbReference type="FunFam" id="3.20.20.540:FF:000001">
    <property type="entry name" value="Phosphomethylpyrimidine synthase"/>
    <property type="match status" value="1"/>
</dbReference>
<dbReference type="Gene3D" id="6.10.250.620">
    <property type="match status" value="1"/>
</dbReference>
<dbReference type="Gene3D" id="3.20.20.540">
    <property type="entry name" value="Radical SAM ThiC family, central domain"/>
    <property type="match status" value="1"/>
</dbReference>
<dbReference type="HAMAP" id="MF_00089">
    <property type="entry name" value="ThiC"/>
    <property type="match status" value="1"/>
</dbReference>
<dbReference type="InterPro" id="IPR037509">
    <property type="entry name" value="ThiC"/>
</dbReference>
<dbReference type="InterPro" id="IPR025747">
    <property type="entry name" value="ThiC-associated_dom"/>
</dbReference>
<dbReference type="InterPro" id="IPR038521">
    <property type="entry name" value="ThiC/Bza_core_dom"/>
</dbReference>
<dbReference type="InterPro" id="IPR002817">
    <property type="entry name" value="ThiC/BzaA/B"/>
</dbReference>
<dbReference type="NCBIfam" id="NF006763">
    <property type="entry name" value="PRK09284.1"/>
    <property type="match status" value="1"/>
</dbReference>
<dbReference type="NCBIfam" id="NF009895">
    <property type="entry name" value="PRK13352.1"/>
    <property type="match status" value="1"/>
</dbReference>
<dbReference type="NCBIfam" id="TIGR00190">
    <property type="entry name" value="thiC"/>
    <property type="match status" value="1"/>
</dbReference>
<dbReference type="PANTHER" id="PTHR30557:SF1">
    <property type="entry name" value="PHOSPHOMETHYLPYRIMIDINE SYNTHASE, CHLOROPLASTIC"/>
    <property type="match status" value="1"/>
</dbReference>
<dbReference type="PANTHER" id="PTHR30557">
    <property type="entry name" value="THIAMINE BIOSYNTHESIS PROTEIN THIC"/>
    <property type="match status" value="1"/>
</dbReference>
<dbReference type="Pfam" id="PF13667">
    <property type="entry name" value="ThiC-associated"/>
    <property type="match status" value="1"/>
</dbReference>
<dbReference type="Pfam" id="PF01964">
    <property type="entry name" value="ThiC_Rad_SAM"/>
    <property type="match status" value="1"/>
</dbReference>
<dbReference type="SFLD" id="SFLDF00407">
    <property type="entry name" value="phosphomethylpyrimidine_syntha"/>
    <property type="match status" value="1"/>
</dbReference>
<dbReference type="SFLD" id="SFLDG01114">
    <property type="entry name" value="phosphomethylpyrimidine_syntha"/>
    <property type="match status" value="1"/>
</dbReference>
<dbReference type="SFLD" id="SFLDS00113">
    <property type="entry name" value="Radical_SAM_Phosphomethylpyrim"/>
    <property type="match status" value="1"/>
</dbReference>
<reference key="1">
    <citation type="journal article" date="2000" name="Nature">
        <title>DNA sequence of both chromosomes of the cholera pathogen Vibrio cholerae.</title>
        <authorList>
            <person name="Heidelberg J.F."/>
            <person name="Eisen J.A."/>
            <person name="Nelson W.C."/>
            <person name="Clayton R.A."/>
            <person name="Gwinn M.L."/>
            <person name="Dodson R.J."/>
            <person name="Haft D.H."/>
            <person name="Hickey E.K."/>
            <person name="Peterson J.D."/>
            <person name="Umayam L.A."/>
            <person name="Gill S.R."/>
            <person name="Nelson K.E."/>
            <person name="Read T.D."/>
            <person name="Tettelin H."/>
            <person name="Richardson D.L."/>
            <person name="Ermolaeva M.D."/>
            <person name="Vamathevan J.J."/>
            <person name="Bass S."/>
            <person name="Qin H."/>
            <person name="Dragoi I."/>
            <person name="Sellers P."/>
            <person name="McDonald L.A."/>
            <person name="Utterback T.R."/>
            <person name="Fleischmann R.D."/>
            <person name="Nierman W.C."/>
            <person name="White O."/>
            <person name="Salzberg S.L."/>
            <person name="Smith H.O."/>
            <person name="Colwell R.R."/>
            <person name="Mekalanos J.J."/>
            <person name="Venter J.C."/>
            <person name="Fraser C.M."/>
        </authorList>
    </citation>
    <scope>NUCLEOTIDE SEQUENCE [LARGE SCALE GENOMIC DNA]</scope>
    <source>
        <strain>ATCC 39315 / El Tor Inaba N16961</strain>
    </source>
</reference>
<accession>Q9KVS8</accession>
<protein>
    <recommendedName>
        <fullName evidence="1">Phosphomethylpyrimidine synthase</fullName>
        <ecNumber evidence="1">4.1.99.17</ecNumber>
    </recommendedName>
    <alternativeName>
        <fullName evidence="1">Hydroxymethylpyrimidine phosphate synthase</fullName>
        <shortName evidence="1">HMP-P synthase</shortName>
        <shortName evidence="1">HMP-phosphate synthase</shortName>
        <shortName evidence="1">HMPP synthase</shortName>
    </alternativeName>
    <alternativeName>
        <fullName evidence="1">Thiamine biosynthesis protein ThiC</fullName>
    </alternativeName>
</protein>
<organism>
    <name type="scientific">Vibrio cholerae serotype O1 (strain ATCC 39315 / El Tor Inaba N16961)</name>
    <dbReference type="NCBI Taxonomy" id="243277"/>
    <lineage>
        <taxon>Bacteria</taxon>
        <taxon>Pseudomonadati</taxon>
        <taxon>Pseudomonadota</taxon>
        <taxon>Gammaproteobacteria</taxon>
        <taxon>Vibrionales</taxon>
        <taxon>Vibrionaceae</taxon>
        <taxon>Vibrio</taxon>
    </lineage>
</organism>
<proteinExistence type="inferred from homology"/>
<keyword id="KW-0004">4Fe-4S</keyword>
<keyword id="KW-0408">Iron</keyword>
<keyword id="KW-0411">Iron-sulfur</keyword>
<keyword id="KW-0456">Lyase</keyword>
<keyword id="KW-0479">Metal-binding</keyword>
<keyword id="KW-1185">Reference proteome</keyword>
<keyword id="KW-0949">S-adenosyl-L-methionine</keyword>
<keyword id="KW-0784">Thiamine biosynthesis</keyword>
<keyword id="KW-0862">Zinc</keyword>
<evidence type="ECO:0000255" key="1">
    <source>
        <dbReference type="HAMAP-Rule" id="MF_00089"/>
    </source>
</evidence>
<comment type="function">
    <text evidence="1">Catalyzes the synthesis of the hydroxymethylpyrimidine phosphate (HMP-P) moiety of thiamine from aminoimidazole ribotide (AIR) in a radical S-adenosyl-L-methionine (SAM)-dependent reaction.</text>
</comment>
<comment type="catalytic activity">
    <reaction evidence="1">
        <text>5-amino-1-(5-phospho-beta-D-ribosyl)imidazole + S-adenosyl-L-methionine = 4-amino-2-methyl-5-(phosphooxymethyl)pyrimidine + CO + 5'-deoxyadenosine + formate + L-methionine + 3 H(+)</text>
        <dbReference type="Rhea" id="RHEA:24840"/>
        <dbReference type="ChEBI" id="CHEBI:15378"/>
        <dbReference type="ChEBI" id="CHEBI:15740"/>
        <dbReference type="ChEBI" id="CHEBI:17245"/>
        <dbReference type="ChEBI" id="CHEBI:17319"/>
        <dbReference type="ChEBI" id="CHEBI:57844"/>
        <dbReference type="ChEBI" id="CHEBI:58354"/>
        <dbReference type="ChEBI" id="CHEBI:59789"/>
        <dbReference type="ChEBI" id="CHEBI:137981"/>
        <dbReference type="EC" id="4.1.99.17"/>
    </reaction>
</comment>
<comment type="cofactor">
    <cofactor evidence="1">
        <name>[4Fe-4S] cluster</name>
        <dbReference type="ChEBI" id="CHEBI:49883"/>
    </cofactor>
    <text evidence="1">Binds 1 [4Fe-4S] cluster per subunit. The cluster is coordinated with 3 cysteines and an exchangeable S-adenosyl-L-methionine.</text>
</comment>
<comment type="pathway">
    <text evidence="1">Cofactor biosynthesis; thiamine diphosphate biosynthesis.</text>
</comment>
<comment type="subunit">
    <text evidence="1">Homodimer.</text>
</comment>
<comment type="similarity">
    <text evidence="1">Belongs to the ThiC family.</text>
</comment>
<sequence length="645" mass="72634">MSNRKQARLEAKRFIDTLSVEPYPNSQKSYLLGSRPDIRVPVREITLSDTLVGGSKDAPIFEPNEPICVYDTSGVYTDPSHDIDLYKGLPKLREEWIEERRDTHILPSMSSHFARERLADETLDELRYGHLPRIRRAMGQHRVTQLHYARQGIITPEMEFVAIRENSRRLAHQDPSLLQQHAGQNFGAHLPDLITPEFVRREIAEGRAIIPCNINHPESEPMIIGRNFLVKVNANIGNSSVSSSIEEEVEKLVWATRWGADTVMDLSTGRNIHETREWILRNSPVPIGTVPMYQALEKVNGVAENLTWEVMRDTLLEQAEQGVDYFTIHAGLLLRYVPMTAKRVTGIVSRGGSIIAKWCLSHHQENFLYTHFREICEICAQYDVALSLGDGLRPGSIADANDEAQFAELRTLGELTQIAWEYDVQVMIEGPGHVPMHLIKANMDEQLKHCHEAPFYTLGPLTTDIAPGYDHITSGIGAAMIGWFGCAMLCYVTPKEHLGLPNKEDVKTGLITYKLAAHAADLAKGHPGAQIRDNALSKARFEFRWEDQFNLALDPVTARAFHDETLPQESGKVAHFCSMCGPKFCSMKISQEVRDYANNQTLDTTVIDLVMPAESIQLAMQDKSREFLASGAELYHPLVKEPIEE</sequence>
<feature type="chain" id="PRO_0000152845" description="Phosphomethylpyrimidine synthase">
    <location>
        <begin position="1"/>
        <end position="645"/>
    </location>
</feature>
<feature type="binding site" evidence="1">
    <location>
        <position position="235"/>
    </location>
    <ligand>
        <name>substrate</name>
    </ligand>
</feature>
<feature type="binding site" evidence="1">
    <location>
        <position position="264"/>
    </location>
    <ligand>
        <name>substrate</name>
    </ligand>
</feature>
<feature type="binding site" evidence="1">
    <location>
        <position position="293"/>
    </location>
    <ligand>
        <name>substrate</name>
    </ligand>
</feature>
<feature type="binding site" evidence="1">
    <location>
        <position position="329"/>
    </location>
    <ligand>
        <name>substrate</name>
    </ligand>
</feature>
<feature type="binding site" evidence="1">
    <location>
        <begin position="349"/>
        <end position="351"/>
    </location>
    <ligand>
        <name>substrate</name>
    </ligand>
</feature>
<feature type="binding site" evidence="1">
    <location>
        <begin position="390"/>
        <end position="393"/>
    </location>
    <ligand>
        <name>substrate</name>
    </ligand>
</feature>
<feature type="binding site" evidence="1">
    <location>
        <position position="429"/>
    </location>
    <ligand>
        <name>substrate</name>
    </ligand>
</feature>
<feature type="binding site" evidence="1">
    <location>
        <position position="433"/>
    </location>
    <ligand>
        <name>Zn(2+)</name>
        <dbReference type="ChEBI" id="CHEBI:29105"/>
    </ligand>
</feature>
<feature type="binding site" evidence="1">
    <location>
        <position position="456"/>
    </location>
    <ligand>
        <name>substrate</name>
    </ligand>
</feature>
<feature type="binding site" evidence="1">
    <location>
        <position position="497"/>
    </location>
    <ligand>
        <name>Zn(2+)</name>
        <dbReference type="ChEBI" id="CHEBI:29105"/>
    </ligand>
</feature>
<feature type="binding site" evidence="1">
    <location>
        <position position="577"/>
    </location>
    <ligand>
        <name>[4Fe-4S] cluster</name>
        <dbReference type="ChEBI" id="CHEBI:49883"/>
        <note>4Fe-4S-S-AdoMet</note>
    </ligand>
</feature>
<feature type="binding site" evidence="1">
    <location>
        <position position="580"/>
    </location>
    <ligand>
        <name>[4Fe-4S] cluster</name>
        <dbReference type="ChEBI" id="CHEBI:49883"/>
        <note>4Fe-4S-S-AdoMet</note>
    </ligand>
</feature>
<feature type="binding site" evidence="1">
    <location>
        <position position="585"/>
    </location>
    <ligand>
        <name>[4Fe-4S] cluster</name>
        <dbReference type="ChEBI" id="CHEBI:49883"/>
        <note>4Fe-4S-S-AdoMet</note>
    </ligand>
</feature>